<sequence>MAHNHNHDHNHEHQHEVITLVDENGNETLFEILLTIDGREEFGKNYVLLVPAGAEEDEQGEIEIQAYSFTENADGTEGDLQPIPEDSDAEWDMIEEVFNSFLDEE</sequence>
<reference key="1">
    <citation type="journal article" date="2002" name="Proc. Natl. Acad. Sci. U.S.A.">
        <title>Complete genome sequence and comparative genomic analysis of an emerging human pathogen, serotype V Streptococcus agalactiae.</title>
        <authorList>
            <person name="Tettelin H."/>
            <person name="Masignani V."/>
            <person name="Cieslewicz M.J."/>
            <person name="Eisen J.A."/>
            <person name="Peterson S.N."/>
            <person name="Wessels M.R."/>
            <person name="Paulsen I.T."/>
            <person name="Nelson K.E."/>
            <person name="Margarit I."/>
            <person name="Read T.D."/>
            <person name="Madoff L.C."/>
            <person name="Wolf A.M."/>
            <person name="Beanan M.J."/>
            <person name="Brinkac L.M."/>
            <person name="Daugherty S.C."/>
            <person name="DeBoy R.T."/>
            <person name="Durkin A.S."/>
            <person name="Kolonay J.F."/>
            <person name="Madupu R."/>
            <person name="Lewis M.R."/>
            <person name="Radune D."/>
            <person name="Fedorova N.B."/>
            <person name="Scanlan D."/>
            <person name="Khouri H.M."/>
            <person name="Mulligan S."/>
            <person name="Carty H.A."/>
            <person name="Cline R.T."/>
            <person name="Van Aken S.E."/>
            <person name="Gill J."/>
            <person name="Scarselli M."/>
            <person name="Mora M."/>
            <person name="Iacobini E.T."/>
            <person name="Brettoni C."/>
            <person name="Galli G."/>
            <person name="Mariani M."/>
            <person name="Vegni F."/>
            <person name="Maione D."/>
            <person name="Rinaudo D."/>
            <person name="Rappuoli R."/>
            <person name="Telford J.L."/>
            <person name="Kasper D.L."/>
            <person name="Grandi G."/>
            <person name="Fraser C.M."/>
        </authorList>
    </citation>
    <scope>NUCLEOTIDE SEQUENCE [LARGE SCALE GENOMIC DNA]</scope>
    <source>
        <strain>ATCC BAA-611 / 2603 V/R</strain>
    </source>
</reference>
<name>Y2089_STRA5</name>
<proteinExistence type="inferred from homology"/>
<protein>
    <recommendedName>
        <fullName evidence="1">UPF0473 protein SAG2089</fullName>
    </recommendedName>
</protein>
<organism>
    <name type="scientific">Streptococcus agalactiae serotype V (strain ATCC BAA-611 / 2603 V/R)</name>
    <dbReference type="NCBI Taxonomy" id="208435"/>
    <lineage>
        <taxon>Bacteria</taxon>
        <taxon>Bacillati</taxon>
        <taxon>Bacillota</taxon>
        <taxon>Bacilli</taxon>
        <taxon>Lactobacillales</taxon>
        <taxon>Streptococcaceae</taxon>
        <taxon>Streptococcus</taxon>
    </lineage>
</organism>
<dbReference type="EMBL" id="AE009948">
    <property type="protein sequence ID" value="AAN00948.1"/>
    <property type="molecule type" value="Genomic_DNA"/>
</dbReference>
<dbReference type="RefSeq" id="NP_689075.1">
    <property type="nucleotide sequence ID" value="NC_004116.1"/>
</dbReference>
<dbReference type="RefSeq" id="WP_000940932.1">
    <property type="nucleotide sequence ID" value="NC_004116.1"/>
</dbReference>
<dbReference type="STRING" id="208435.SAG2089"/>
<dbReference type="KEGG" id="sag:SAG2089"/>
<dbReference type="PATRIC" id="fig|208435.3.peg.2091"/>
<dbReference type="HOGENOM" id="CLU_146610_2_1_9"/>
<dbReference type="OrthoDB" id="2086132at2"/>
<dbReference type="Proteomes" id="UP000000821">
    <property type="component" value="Chromosome"/>
</dbReference>
<dbReference type="HAMAP" id="MF_01448">
    <property type="entry name" value="UPF0473"/>
    <property type="match status" value="1"/>
</dbReference>
<dbReference type="InterPro" id="IPR009711">
    <property type="entry name" value="UPF0473"/>
</dbReference>
<dbReference type="NCBIfam" id="NF010215">
    <property type="entry name" value="PRK13678.1-2"/>
    <property type="match status" value="1"/>
</dbReference>
<dbReference type="NCBIfam" id="NF010217">
    <property type="entry name" value="PRK13678.1-4"/>
    <property type="match status" value="1"/>
</dbReference>
<dbReference type="PANTHER" id="PTHR40066">
    <property type="entry name" value="UPF0473 PROTEIN CBO2561/CLC_2432"/>
    <property type="match status" value="1"/>
</dbReference>
<dbReference type="PANTHER" id="PTHR40066:SF1">
    <property type="entry name" value="UPF0473 PROTEIN CBO2561_CLC_2432"/>
    <property type="match status" value="1"/>
</dbReference>
<dbReference type="Pfam" id="PF06949">
    <property type="entry name" value="DUF1292"/>
    <property type="match status" value="1"/>
</dbReference>
<comment type="similarity">
    <text evidence="1">Belongs to the UPF0473 family.</text>
</comment>
<feature type="chain" id="PRO_0000304855" description="UPF0473 protein SAG2089">
    <location>
        <begin position="1"/>
        <end position="105"/>
    </location>
</feature>
<keyword id="KW-1185">Reference proteome</keyword>
<accession>Q8DWX2</accession>
<gene>
    <name type="ordered locus">SAG2089</name>
</gene>
<evidence type="ECO:0000255" key="1">
    <source>
        <dbReference type="HAMAP-Rule" id="MF_01448"/>
    </source>
</evidence>